<sequence>MDMNQYLDVFIDESKEHLQTCNEKLLLLEKDPTDLQLVHDIFRAAHTLKGMSATMGYTDLAHLTHLLENVLDAIRNGDMEVTSDWLDILFEALDHLETMVQSIIDGGDGKRDISEVSAKLDVNGAHAESAASAEPAEAQSSASDWEYDEFERTVIQEAEEQGFKRYEIKISLNENCMLKAVRVYMVFEKLNEVGEVAKTIPSAEVLETEDFGTDFQVCFLTHQSAEDIEQLINGVSEIEHVEVIQGAPLTSAEKPEESKQEDSPAAAVPAKQEKQKQPAKNDEQAKHSAGGSKTIRVNIDRLDSLMNLFEELVIDRGRLEQIAKELEHNELTETVERMTRISGDLQSIILNMRMVPVETVFNRFPRMIRQLQKELNKKIELSIIGAETELDRTVIDEIGDPLVHLIRNSIDHGIEAPETRLQKGKPESGKVVLKAYHSGNHVFIEVEDDGAGLNRKKILEKALERGVITEKEAETLEDNQIYELIFAPGFSTADQISDISGRGVGLDVVKNKLESLGGSVSVKSAEGQGSLFSIQLPLTLSIISVLLIKLEEETFAIPISSIIETAVIDRKDILQTHDREVIDFRGHIVPVVYLKEEFKIEDTRKDAEQLHIIVVKKGDKPTAFVVDSFIGQQEVVLKSLGDYLTNVFAISGATILGDGEVALIIDCNALII</sequence>
<keyword id="KW-0067">ATP-binding</keyword>
<keyword id="KW-0145">Chemotaxis</keyword>
<keyword id="KW-0418">Kinase</keyword>
<keyword id="KW-0472">Membrane</keyword>
<keyword id="KW-0547">Nucleotide-binding</keyword>
<keyword id="KW-0597">Phosphoprotein</keyword>
<keyword id="KW-1185">Reference proteome</keyword>
<keyword id="KW-0808">Transferase</keyword>
<keyword id="KW-0902">Two-component regulatory system</keyword>
<dbReference type="EC" id="2.7.13.3"/>
<dbReference type="EMBL" id="M57894">
    <property type="protein sequence ID" value="AAA22313.1"/>
    <property type="molecule type" value="Genomic_DNA"/>
</dbReference>
<dbReference type="EMBL" id="AL009126">
    <property type="protein sequence ID" value="CAB13516.2"/>
    <property type="molecule type" value="Genomic_DNA"/>
</dbReference>
<dbReference type="PIR" id="A41653">
    <property type="entry name" value="QRBSCN"/>
</dbReference>
<dbReference type="RefSeq" id="NP_389525.2">
    <property type="nucleotide sequence ID" value="NC_000964.3"/>
</dbReference>
<dbReference type="RefSeq" id="WP_003245734.1">
    <property type="nucleotide sequence ID" value="NZ_OZ025638.1"/>
</dbReference>
<dbReference type="SMR" id="P29072"/>
<dbReference type="FunCoup" id="P29072">
    <property type="interactions" value="310"/>
</dbReference>
<dbReference type="IntAct" id="P29072">
    <property type="interactions" value="7"/>
</dbReference>
<dbReference type="STRING" id="224308.BSU16430"/>
<dbReference type="jPOST" id="P29072"/>
<dbReference type="PaxDb" id="224308-BSU16430"/>
<dbReference type="EnsemblBacteria" id="CAB13516">
    <property type="protein sequence ID" value="CAB13516"/>
    <property type="gene ID" value="BSU_16430"/>
</dbReference>
<dbReference type="GeneID" id="939600"/>
<dbReference type="KEGG" id="bsu:BSU16430"/>
<dbReference type="PATRIC" id="fig|224308.179.peg.1784"/>
<dbReference type="eggNOG" id="COG0643">
    <property type="taxonomic scope" value="Bacteria"/>
</dbReference>
<dbReference type="eggNOG" id="COG2198">
    <property type="taxonomic scope" value="Bacteria"/>
</dbReference>
<dbReference type="InParanoid" id="P29072"/>
<dbReference type="OrthoDB" id="9803176at2"/>
<dbReference type="PhylomeDB" id="P29072"/>
<dbReference type="BioCyc" id="BSUB:BSU16430-MONOMER"/>
<dbReference type="BRENDA" id="2.7.13.3">
    <property type="organism ID" value="658"/>
</dbReference>
<dbReference type="Proteomes" id="UP000001570">
    <property type="component" value="Chromosome"/>
</dbReference>
<dbReference type="GO" id="GO:0005737">
    <property type="term" value="C:cytoplasm"/>
    <property type="evidence" value="ECO:0007669"/>
    <property type="project" value="InterPro"/>
</dbReference>
<dbReference type="GO" id="GO:0016020">
    <property type="term" value="C:membrane"/>
    <property type="evidence" value="ECO:0007669"/>
    <property type="project" value="UniProtKB-SubCell"/>
</dbReference>
<dbReference type="GO" id="GO:0005524">
    <property type="term" value="F:ATP binding"/>
    <property type="evidence" value="ECO:0007669"/>
    <property type="project" value="UniProtKB-KW"/>
</dbReference>
<dbReference type="GO" id="GO:0000155">
    <property type="term" value="F:phosphorelay sensor kinase activity"/>
    <property type="evidence" value="ECO:0007669"/>
    <property type="project" value="InterPro"/>
</dbReference>
<dbReference type="GO" id="GO:0071978">
    <property type="term" value="P:bacterial-type flagellum-dependent swarming motility"/>
    <property type="evidence" value="ECO:0000315"/>
    <property type="project" value="CACAO"/>
</dbReference>
<dbReference type="GO" id="GO:0006935">
    <property type="term" value="P:chemotaxis"/>
    <property type="evidence" value="ECO:0007669"/>
    <property type="project" value="UniProtKB-KW"/>
</dbReference>
<dbReference type="CDD" id="cd00731">
    <property type="entry name" value="CheA_reg"/>
    <property type="match status" value="1"/>
</dbReference>
<dbReference type="CDD" id="cd16916">
    <property type="entry name" value="HATPase_CheA-like"/>
    <property type="match status" value="1"/>
</dbReference>
<dbReference type="CDD" id="cd00088">
    <property type="entry name" value="HPT"/>
    <property type="match status" value="1"/>
</dbReference>
<dbReference type="FunFam" id="3.30.565.10:FF:000016">
    <property type="entry name" value="Chemotaxis protein CheA, putative"/>
    <property type="match status" value="1"/>
</dbReference>
<dbReference type="Gene3D" id="1.10.287.560">
    <property type="entry name" value="Histidine kinase CheA-like, homodimeric domain"/>
    <property type="match status" value="1"/>
</dbReference>
<dbReference type="Gene3D" id="3.30.70.1110">
    <property type="entry name" value="Histidine kinase CheA-like, P2 response regulator-binding domain"/>
    <property type="match status" value="1"/>
</dbReference>
<dbReference type="Gene3D" id="3.30.565.10">
    <property type="entry name" value="Histidine kinase-like ATPase, C-terminal domain"/>
    <property type="match status" value="1"/>
</dbReference>
<dbReference type="Gene3D" id="1.20.120.160">
    <property type="entry name" value="HPT domain"/>
    <property type="match status" value="1"/>
</dbReference>
<dbReference type="Gene3D" id="2.30.30.40">
    <property type="entry name" value="SH3 Domains"/>
    <property type="match status" value="1"/>
</dbReference>
<dbReference type="InterPro" id="IPR051315">
    <property type="entry name" value="Bact_Chemotaxis_CheA"/>
</dbReference>
<dbReference type="InterPro" id="IPR004105">
    <property type="entry name" value="CheA-like_dim"/>
</dbReference>
<dbReference type="InterPro" id="IPR037006">
    <property type="entry name" value="CheA-like_homodim_sf"/>
</dbReference>
<dbReference type="InterPro" id="IPR037052">
    <property type="entry name" value="CheA-like_P2_sf"/>
</dbReference>
<dbReference type="InterPro" id="IPR010808">
    <property type="entry name" value="CheA_P2-bd"/>
</dbReference>
<dbReference type="InterPro" id="IPR036061">
    <property type="entry name" value="CheW-like_dom_sf"/>
</dbReference>
<dbReference type="InterPro" id="IPR002545">
    <property type="entry name" value="CheW-lke_dom"/>
</dbReference>
<dbReference type="InterPro" id="IPR035891">
    <property type="entry name" value="CheY-binding_CheA"/>
</dbReference>
<dbReference type="InterPro" id="IPR036890">
    <property type="entry name" value="HATPase_C_sf"/>
</dbReference>
<dbReference type="InterPro" id="IPR005467">
    <property type="entry name" value="His_kinase_dom"/>
</dbReference>
<dbReference type="InterPro" id="IPR036097">
    <property type="entry name" value="HisK_dim/P_sf"/>
</dbReference>
<dbReference type="InterPro" id="IPR036641">
    <property type="entry name" value="HPT_dom_sf"/>
</dbReference>
<dbReference type="InterPro" id="IPR004358">
    <property type="entry name" value="Sig_transdc_His_kin-like_C"/>
</dbReference>
<dbReference type="InterPro" id="IPR008207">
    <property type="entry name" value="Sig_transdc_His_kin_Hpt_dom"/>
</dbReference>
<dbReference type="PANTHER" id="PTHR43395:SF1">
    <property type="entry name" value="CHEMOTAXIS PROTEIN CHEA"/>
    <property type="match status" value="1"/>
</dbReference>
<dbReference type="PANTHER" id="PTHR43395">
    <property type="entry name" value="SENSOR HISTIDINE KINASE CHEA"/>
    <property type="match status" value="1"/>
</dbReference>
<dbReference type="Pfam" id="PF01584">
    <property type="entry name" value="CheW"/>
    <property type="match status" value="1"/>
</dbReference>
<dbReference type="Pfam" id="PF02895">
    <property type="entry name" value="H-kinase_dim"/>
    <property type="match status" value="1"/>
</dbReference>
<dbReference type="Pfam" id="PF02518">
    <property type="entry name" value="HATPase_c"/>
    <property type="match status" value="1"/>
</dbReference>
<dbReference type="Pfam" id="PF01627">
    <property type="entry name" value="Hpt"/>
    <property type="match status" value="1"/>
</dbReference>
<dbReference type="Pfam" id="PF07194">
    <property type="entry name" value="P2"/>
    <property type="match status" value="1"/>
</dbReference>
<dbReference type="PRINTS" id="PR00344">
    <property type="entry name" value="BCTRLSENSOR"/>
</dbReference>
<dbReference type="SMART" id="SM00260">
    <property type="entry name" value="CheW"/>
    <property type="match status" value="1"/>
</dbReference>
<dbReference type="SMART" id="SM01231">
    <property type="entry name" value="H-kinase_dim"/>
    <property type="match status" value="1"/>
</dbReference>
<dbReference type="SMART" id="SM00387">
    <property type="entry name" value="HATPase_c"/>
    <property type="match status" value="1"/>
</dbReference>
<dbReference type="SMART" id="SM00073">
    <property type="entry name" value="HPT"/>
    <property type="match status" value="1"/>
</dbReference>
<dbReference type="SUPFAM" id="SSF55874">
    <property type="entry name" value="ATPase domain of HSP90 chaperone/DNA topoisomerase II/histidine kinase"/>
    <property type="match status" value="1"/>
</dbReference>
<dbReference type="SUPFAM" id="SSF50341">
    <property type="entry name" value="CheW-like"/>
    <property type="match status" value="1"/>
</dbReference>
<dbReference type="SUPFAM" id="SSF55052">
    <property type="entry name" value="CheY-binding domain of CheA"/>
    <property type="match status" value="1"/>
</dbReference>
<dbReference type="SUPFAM" id="SSF47226">
    <property type="entry name" value="Histidine-containing phosphotransfer domain, HPT domain"/>
    <property type="match status" value="1"/>
</dbReference>
<dbReference type="SUPFAM" id="SSF47384">
    <property type="entry name" value="Homodimeric domain of signal transducing histidine kinase"/>
    <property type="match status" value="1"/>
</dbReference>
<dbReference type="PROSITE" id="PS50851">
    <property type="entry name" value="CHEW"/>
    <property type="match status" value="1"/>
</dbReference>
<dbReference type="PROSITE" id="PS50109">
    <property type="entry name" value="HIS_KIN"/>
    <property type="match status" value="1"/>
</dbReference>
<dbReference type="PROSITE" id="PS50894">
    <property type="entry name" value="HPT"/>
    <property type="match status" value="1"/>
</dbReference>
<protein>
    <recommendedName>
        <fullName>Chemotaxis protein CheA</fullName>
        <ecNumber>2.7.13.3</ecNumber>
    </recommendedName>
</protein>
<evidence type="ECO:0000255" key="1">
    <source>
        <dbReference type="PROSITE-ProRule" id="PRU00052"/>
    </source>
</evidence>
<evidence type="ECO:0000255" key="2">
    <source>
        <dbReference type="PROSITE-ProRule" id="PRU00107"/>
    </source>
</evidence>
<evidence type="ECO:0000255" key="3">
    <source>
        <dbReference type="PROSITE-ProRule" id="PRU00110"/>
    </source>
</evidence>
<evidence type="ECO:0000256" key="4">
    <source>
        <dbReference type="SAM" id="MobiDB-lite"/>
    </source>
</evidence>
<evidence type="ECO:0000269" key="5">
    <source>
    </source>
</evidence>
<evidence type="ECO:0000305" key="6"/>
<name>CHEA_BACSU</name>
<gene>
    <name type="primary">cheA</name>
    <name type="synonym">cheN</name>
    <name type="ordered locus">BSU16430</name>
</gene>
<accession>P29072</accession>
<proteinExistence type="evidence at protein level"/>
<feature type="chain" id="PRO_0000074711" description="Chemotaxis protein CheA">
    <location>
        <begin position="1"/>
        <end position="672"/>
    </location>
</feature>
<feature type="domain" description="HPt" evidence="3">
    <location>
        <begin position="1"/>
        <end position="103"/>
    </location>
</feature>
<feature type="domain" description="Histidine kinase" evidence="2">
    <location>
        <begin position="290"/>
        <end position="540"/>
    </location>
</feature>
<feature type="domain" description="CheW-like" evidence="1">
    <location>
        <begin position="542"/>
        <end position="672"/>
    </location>
</feature>
<feature type="region of interest" description="Disordered" evidence="4">
    <location>
        <begin position="250"/>
        <end position="292"/>
    </location>
</feature>
<feature type="compositionally biased region" description="Basic and acidic residues" evidence="4">
    <location>
        <begin position="253"/>
        <end position="262"/>
    </location>
</feature>
<feature type="compositionally biased region" description="Basic and acidic residues" evidence="4">
    <location>
        <begin position="271"/>
        <end position="286"/>
    </location>
</feature>
<feature type="modified residue" description="Phosphohistidine; by autocatalysis" evidence="2">
    <location>
        <position position="46"/>
    </location>
</feature>
<feature type="sequence conflict" description="In Ref. 1; AAA22313." evidence="6" ref="1">
    <original>KQ</original>
    <variation>NE</variation>
    <location>
        <begin position="271"/>
        <end position="272"/>
    </location>
</feature>
<feature type="sequence conflict" description="In Ref. 1; AAA22313." evidence="6" ref="1">
    <original>A</original>
    <variation>P</variation>
    <location>
        <position position="462"/>
    </location>
</feature>
<feature type="sequence conflict" description="In Ref. 1; AAA22313." evidence="6" ref="1">
    <location>
        <position position="466"/>
    </location>
</feature>
<comment type="function">
    <text evidence="5">Involved in the transmission of sensory signals from the chemoreceptors to the flagellar motors. CheA is autophosphorylated; it can transfer its phosphate group to CheB, CheY or CheV.</text>
</comment>
<comment type="catalytic activity">
    <reaction evidence="5">
        <text>ATP + protein L-histidine = ADP + protein N-phospho-L-histidine.</text>
        <dbReference type="EC" id="2.7.13.3"/>
    </reaction>
</comment>
<comment type="subcellular location">
    <subcellularLocation>
        <location evidence="6">Membrane</location>
    </subcellularLocation>
    <text>It is not known whether CheA is actually membrane bound although CheA has two regions at the C-terminal end with the potential to be transmembrane regions.</text>
</comment>
<reference key="1">
    <citation type="journal article" date="1991" name="J. Bacteriol.">
        <title>Bacillus subtilis CheN, a homolog of CheA, the central regulator of chemotaxis in Escherichia coli.</title>
        <authorList>
            <person name="Fuhrer D.K."/>
            <person name="Ordal G.W."/>
        </authorList>
    </citation>
    <scope>NUCLEOTIDE SEQUENCE [GENOMIC DNA]</scope>
</reference>
<reference key="2">
    <citation type="journal article" date="1997" name="Nature">
        <title>The complete genome sequence of the Gram-positive bacterium Bacillus subtilis.</title>
        <authorList>
            <person name="Kunst F."/>
            <person name="Ogasawara N."/>
            <person name="Moszer I."/>
            <person name="Albertini A.M."/>
            <person name="Alloni G."/>
            <person name="Azevedo V."/>
            <person name="Bertero M.G."/>
            <person name="Bessieres P."/>
            <person name="Bolotin A."/>
            <person name="Borchert S."/>
            <person name="Borriss R."/>
            <person name="Boursier L."/>
            <person name="Brans A."/>
            <person name="Braun M."/>
            <person name="Brignell S.C."/>
            <person name="Bron S."/>
            <person name="Brouillet S."/>
            <person name="Bruschi C.V."/>
            <person name="Caldwell B."/>
            <person name="Capuano V."/>
            <person name="Carter N.M."/>
            <person name="Choi S.-K."/>
            <person name="Codani J.-J."/>
            <person name="Connerton I.F."/>
            <person name="Cummings N.J."/>
            <person name="Daniel R.A."/>
            <person name="Denizot F."/>
            <person name="Devine K.M."/>
            <person name="Duesterhoeft A."/>
            <person name="Ehrlich S.D."/>
            <person name="Emmerson P.T."/>
            <person name="Entian K.-D."/>
            <person name="Errington J."/>
            <person name="Fabret C."/>
            <person name="Ferrari E."/>
            <person name="Foulger D."/>
            <person name="Fritz C."/>
            <person name="Fujita M."/>
            <person name="Fujita Y."/>
            <person name="Fuma S."/>
            <person name="Galizzi A."/>
            <person name="Galleron N."/>
            <person name="Ghim S.-Y."/>
            <person name="Glaser P."/>
            <person name="Goffeau A."/>
            <person name="Golightly E.J."/>
            <person name="Grandi G."/>
            <person name="Guiseppi G."/>
            <person name="Guy B.J."/>
            <person name="Haga K."/>
            <person name="Haiech J."/>
            <person name="Harwood C.R."/>
            <person name="Henaut A."/>
            <person name="Hilbert H."/>
            <person name="Holsappel S."/>
            <person name="Hosono S."/>
            <person name="Hullo M.-F."/>
            <person name="Itaya M."/>
            <person name="Jones L.-M."/>
            <person name="Joris B."/>
            <person name="Karamata D."/>
            <person name="Kasahara Y."/>
            <person name="Klaerr-Blanchard M."/>
            <person name="Klein C."/>
            <person name="Kobayashi Y."/>
            <person name="Koetter P."/>
            <person name="Koningstein G."/>
            <person name="Krogh S."/>
            <person name="Kumano M."/>
            <person name="Kurita K."/>
            <person name="Lapidus A."/>
            <person name="Lardinois S."/>
            <person name="Lauber J."/>
            <person name="Lazarevic V."/>
            <person name="Lee S.-M."/>
            <person name="Levine A."/>
            <person name="Liu H."/>
            <person name="Masuda S."/>
            <person name="Mauel C."/>
            <person name="Medigue C."/>
            <person name="Medina N."/>
            <person name="Mellado R.P."/>
            <person name="Mizuno M."/>
            <person name="Moestl D."/>
            <person name="Nakai S."/>
            <person name="Noback M."/>
            <person name="Noone D."/>
            <person name="O'Reilly M."/>
            <person name="Ogawa K."/>
            <person name="Ogiwara A."/>
            <person name="Oudega B."/>
            <person name="Park S.-H."/>
            <person name="Parro V."/>
            <person name="Pohl T.M."/>
            <person name="Portetelle D."/>
            <person name="Porwollik S."/>
            <person name="Prescott A.M."/>
            <person name="Presecan E."/>
            <person name="Pujic P."/>
            <person name="Purnelle B."/>
            <person name="Rapoport G."/>
            <person name="Rey M."/>
            <person name="Reynolds S."/>
            <person name="Rieger M."/>
            <person name="Rivolta C."/>
            <person name="Rocha E."/>
            <person name="Roche B."/>
            <person name="Rose M."/>
            <person name="Sadaie Y."/>
            <person name="Sato T."/>
            <person name="Scanlan E."/>
            <person name="Schleich S."/>
            <person name="Schroeter R."/>
            <person name="Scoffone F."/>
            <person name="Sekiguchi J."/>
            <person name="Sekowska A."/>
            <person name="Seror S.J."/>
            <person name="Serror P."/>
            <person name="Shin B.-S."/>
            <person name="Soldo B."/>
            <person name="Sorokin A."/>
            <person name="Tacconi E."/>
            <person name="Takagi T."/>
            <person name="Takahashi H."/>
            <person name="Takemaru K."/>
            <person name="Takeuchi M."/>
            <person name="Tamakoshi A."/>
            <person name="Tanaka T."/>
            <person name="Terpstra P."/>
            <person name="Tognoni A."/>
            <person name="Tosato V."/>
            <person name="Uchiyama S."/>
            <person name="Vandenbol M."/>
            <person name="Vannier F."/>
            <person name="Vassarotti A."/>
            <person name="Viari A."/>
            <person name="Wambutt R."/>
            <person name="Wedler E."/>
            <person name="Wedler H."/>
            <person name="Weitzenegger T."/>
            <person name="Winters P."/>
            <person name="Wipat A."/>
            <person name="Yamamoto H."/>
            <person name="Yamane K."/>
            <person name="Yasumoto K."/>
            <person name="Yata K."/>
            <person name="Yoshida K."/>
            <person name="Yoshikawa H.-F."/>
            <person name="Zumstein E."/>
            <person name="Yoshikawa H."/>
            <person name="Danchin A."/>
        </authorList>
    </citation>
    <scope>NUCLEOTIDE SEQUENCE [LARGE SCALE GENOMIC DNA]</scope>
    <source>
        <strain>168</strain>
    </source>
</reference>
<reference key="3">
    <citation type="journal article" date="2009" name="Microbiology">
        <title>From a consortium sequence to a unified sequence: the Bacillus subtilis 168 reference genome a decade later.</title>
        <authorList>
            <person name="Barbe V."/>
            <person name="Cruveiller S."/>
            <person name="Kunst F."/>
            <person name="Lenoble P."/>
            <person name="Meurice G."/>
            <person name="Sekowska A."/>
            <person name="Vallenet D."/>
            <person name="Wang T."/>
            <person name="Moszer I."/>
            <person name="Medigue C."/>
            <person name="Danchin A."/>
        </authorList>
    </citation>
    <scope>SEQUENCE REVISION TO 271-272; 462 AND 466</scope>
</reference>
<reference key="4">
    <citation type="journal article" date="2001" name="J. Biol. Chem.">
        <title>Phosphorylation of the response regulator CheV is required for adaptation to attractants during Bacillus subtilis chemotaxis.</title>
        <authorList>
            <person name="Karatan E."/>
            <person name="Saulmon M.M."/>
            <person name="Bunn M.W."/>
            <person name="Ordal G.W."/>
        </authorList>
    </citation>
    <scope>FUNCTION</scope>
    <scope>CATALYTIC ACTIVITY</scope>
    <scope>PHOSPHORYLATION OF CHEV</scope>
    <source>
        <strain>168 / OI1085</strain>
    </source>
</reference>
<organism>
    <name type="scientific">Bacillus subtilis (strain 168)</name>
    <dbReference type="NCBI Taxonomy" id="224308"/>
    <lineage>
        <taxon>Bacteria</taxon>
        <taxon>Bacillati</taxon>
        <taxon>Bacillota</taxon>
        <taxon>Bacilli</taxon>
        <taxon>Bacillales</taxon>
        <taxon>Bacillaceae</taxon>
        <taxon>Bacillus</taxon>
    </lineage>
</organism>